<name>TDA2_YEASA</name>
<protein>
    <recommendedName>
        <fullName>Topoisomerase I damage affected protein 2</fullName>
    </recommendedName>
</protein>
<feature type="chain" id="PRO_0000410738" description="Topoisomerase I damage affected protein 2">
    <location>
        <begin position="1"/>
        <end position="124"/>
    </location>
</feature>
<accession>E7KBS9</accession>
<organism>
    <name type="scientific">Saccharomyces cerevisiae (strain AWRI796)</name>
    <name type="common">Baker's yeast</name>
    <dbReference type="NCBI Taxonomy" id="764097"/>
    <lineage>
        <taxon>Eukaryota</taxon>
        <taxon>Fungi</taxon>
        <taxon>Dikarya</taxon>
        <taxon>Ascomycota</taxon>
        <taxon>Saccharomycotina</taxon>
        <taxon>Saccharomycetes</taxon>
        <taxon>Saccharomycetales</taxon>
        <taxon>Saccharomycetaceae</taxon>
        <taxon>Saccharomyces</taxon>
    </lineage>
</organism>
<keyword id="KW-0966">Cell projection</keyword>
<keyword id="KW-0963">Cytoplasm</keyword>
<reference key="1">
    <citation type="journal article" date="2011" name="PLoS Genet.">
        <title>Whole-genome comparison reveals novel genetic elements that characterize the genome of industrial strains of Saccharomyces cerevisiae.</title>
        <authorList>
            <person name="Borneman A.R."/>
            <person name="Desany B.A."/>
            <person name="Riches D."/>
            <person name="Affourtit J.P."/>
            <person name="Forgan A.H."/>
            <person name="Pretorius I.S."/>
            <person name="Egholm M."/>
            <person name="Chambers P.J."/>
        </authorList>
    </citation>
    <scope>NUCLEOTIDE SEQUENCE [LARGE SCALE GENOMIC DNA]</scope>
    <source>
        <strain>AWRI796</strain>
    </source>
</reference>
<dbReference type="EMBL" id="ADVS01000020">
    <property type="protein sequence ID" value="EGA75245.1"/>
    <property type="molecule type" value="Genomic_DNA"/>
</dbReference>
<dbReference type="SMR" id="E7KBS9"/>
<dbReference type="HOGENOM" id="CLU_137494_1_0_1"/>
<dbReference type="OMA" id="TIIWISK"/>
<dbReference type="OrthoDB" id="10059120at2759"/>
<dbReference type="GO" id="GO:0042995">
    <property type="term" value="C:cell projection"/>
    <property type="evidence" value="ECO:0007669"/>
    <property type="project" value="UniProtKB-SubCell"/>
</dbReference>
<dbReference type="GO" id="GO:0005737">
    <property type="term" value="C:cytoplasm"/>
    <property type="evidence" value="ECO:0007669"/>
    <property type="project" value="UniProtKB-SubCell"/>
</dbReference>
<dbReference type="CDD" id="cd21457">
    <property type="entry name" value="DLC-like_TDA2"/>
    <property type="match status" value="1"/>
</dbReference>
<dbReference type="FunFam" id="3.30.1140.40:FF:000005">
    <property type="entry name" value="Topoisomerase I damage affected protein 2"/>
    <property type="match status" value="1"/>
</dbReference>
<dbReference type="Gene3D" id="3.30.1140.40">
    <property type="entry name" value="Tctex-1"/>
    <property type="match status" value="1"/>
</dbReference>
<dbReference type="InterPro" id="IPR038586">
    <property type="entry name" value="Tctex-1-like_sf"/>
</dbReference>
<proteinExistence type="inferred from homology"/>
<evidence type="ECO:0000250" key="1">
    <source>
        <dbReference type="UniProtKB" id="P40045"/>
    </source>
</evidence>
<evidence type="ECO:0000305" key="2"/>
<comment type="subcellular location">
    <subcellularLocation>
        <location evidence="1">Cytoplasm</location>
    </subcellularLocation>
    <subcellularLocation>
        <location evidence="1">Cell projection</location>
    </subcellularLocation>
    <text evidence="1">Concentrates at cytoplasmic punctate structures and localizes at the mating projection tip.</text>
</comment>
<comment type="similarity">
    <text evidence="2">Belongs to the TDA2 family.</text>
</comment>
<sequence length="124" mass="14253">MQIEIKDGRSDNSPLPERKLVTLIQESYDSLKDDNEINLSTESTSNLLIKLVLEKLEKHSSLYKYIASVTTLNIEGLNEENANFSLKNDIGASWESKKDGIFNYKLEDKNSNECYLITILWLHK</sequence>
<gene>
    <name type="primary">TDA2</name>
    <name type="ORF">AWRI796_1353</name>
</gene>